<name>SURE_CHLL3</name>
<gene>
    <name evidence="1" type="primary">surE</name>
    <name type="ordered locus">Plut_0361</name>
</gene>
<dbReference type="EC" id="3.1.3.5" evidence="1"/>
<dbReference type="EMBL" id="CP000096">
    <property type="protein sequence ID" value="ABB23249.1"/>
    <property type="molecule type" value="Genomic_DNA"/>
</dbReference>
<dbReference type="RefSeq" id="WP_011357124.1">
    <property type="nucleotide sequence ID" value="NC_007512.1"/>
</dbReference>
<dbReference type="SMR" id="Q3B5Y2"/>
<dbReference type="STRING" id="319225.Plut_0361"/>
<dbReference type="KEGG" id="plt:Plut_0361"/>
<dbReference type="eggNOG" id="COG0496">
    <property type="taxonomic scope" value="Bacteria"/>
</dbReference>
<dbReference type="HOGENOM" id="CLU_045192_1_0_10"/>
<dbReference type="OrthoDB" id="9780815at2"/>
<dbReference type="Proteomes" id="UP000002709">
    <property type="component" value="Chromosome"/>
</dbReference>
<dbReference type="GO" id="GO:0005737">
    <property type="term" value="C:cytoplasm"/>
    <property type="evidence" value="ECO:0007669"/>
    <property type="project" value="UniProtKB-SubCell"/>
</dbReference>
<dbReference type="GO" id="GO:0008254">
    <property type="term" value="F:3'-nucleotidase activity"/>
    <property type="evidence" value="ECO:0007669"/>
    <property type="project" value="TreeGrafter"/>
</dbReference>
<dbReference type="GO" id="GO:0008253">
    <property type="term" value="F:5'-nucleotidase activity"/>
    <property type="evidence" value="ECO:0007669"/>
    <property type="project" value="UniProtKB-UniRule"/>
</dbReference>
<dbReference type="GO" id="GO:0004309">
    <property type="term" value="F:exopolyphosphatase activity"/>
    <property type="evidence" value="ECO:0007669"/>
    <property type="project" value="TreeGrafter"/>
</dbReference>
<dbReference type="GO" id="GO:0046872">
    <property type="term" value="F:metal ion binding"/>
    <property type="evidence" value="ECO:0007669"/>
    <property type="project" value="UniProtKB-UniRule"/>
</dbReference>
<dbReference type="GO" id="GO:0000166">
    <property type="term" value="F:nucleotide binding"/>
    <property type="evidence" value="ECO:0007669"/>
    <property type="project" value="UniProtKB-KW"/>
</dbReference>
<dbReference type="FunFam" id="3.40.1210.10:FF:000001">
    <property type="entry name" value="5'/3'-nucleotidase SurE"/>
    <property type="match status" value="1"/>
</dbReference>
<dbReference type="Gene3D" id="3.40.1210.10">
    <property type="entry name" value="Survival protein SurE-like phosphatase/nucleotidase"/>
    <property type="match status" value="1"/>
</dbReference>
<dbReference type="HAMAP" id="MF_00060">
    <property type="entry name" value="SurE"/>
    <property type="match status" value="1"/>
</dbReference>
<dbReference type="InterPro" id="IPR030048">
    <property type="entry name" value="SurE"/>
</dbReference>
<dbReference type="InterPro" id="IPR002828">
    <property type="entry name" value="SurE-like_Pase/nucleotidase"/>
</dbReference>
<dbReference type="InterPro" id="IPR036523">
    <property type="entry name" value="SurE-like_sf"/>
</dbReference>
<dbReference type="NCBIfam" id="NF001490">
    <property type="entry name" value="PRK00346.1-4"/>
    <property type="match status" value="1"/>
</dbReference>
<dbReference type="NCBIfam" id="NF001492">
    <property type="entry name" value="PRK00346.2-2"/>
    <property type="match status" value="1"/>
</dbReference>
<dbReference type="NCBIfam" id="NF010542">
    <property type="entry name" value="PRK13932.1"/>
    <property type="match status" value="1"/>
</dbReference>
<dbReference type="NCBIfam" id="TIGR00087">
    <property type="entry name" value="surE"/>
    <property type="match status" value="1"/>
</dbReference>
<dbReference type="PANTHER" id="PTHR30457">
    <property type="entry name" value="5'-NUCLEOTIDASE SURE"/>
    <property type="match status" value="1"/>
</dbReference>
<dbReference type="PANTHER" id="PTHR30457:SF12">
    <property type="entry name" value="5'_3'-NUCLEOTIDASE SURE"/>
    <property type="match status" value="1"/>
</dbReference>
<dbReference type="Pfam" id="PF01975">
    <property type="entry name" value="SurE"/>
    <property type="match status" value="1"/>
</dbReference>
<dbReference type="SUPFAM" id="SSF64167">
    <property type="entry name" value="SurE-like"/>
    <property type="match status" value="1"/>
</dbReference>
<feature type="chain" id="PRO_0000235633" description="5'-nucleotidase SurE">
    <location>
        <begin position="1"/>
        <end position="259"/>
    </location>
</feature>
<feature type="binding site" evidence="1">
    <location>
        <position position="15"/>
    </location>
    <ligand>
        <name>a divalent metal cation</name>
        <dbReference type="ChEBI" id="CHEBI:60240"/>
    </ligand>
</feature>
<feature type="binding site" evidence="1">
    <location>
        <position position="16"/>
    </location>
    <ligand>
        <name>a divalent metal cation</name>
        <dbReference type="ChEBI" id="CHEBI:60240"/>
    </ligand>
</feature>
<feature type="binding site" evidence="1">
    <location>
        <position position="46"/>
    </location>
    <ligand>
        <name>a divalent metal cation</name>
        <dbReference type="ChEBI" id="CHEBI:60240"/>
    </ligand>
</feature>
<feature type="binding site" evidence="1">
    <location>
        <position position="102"/>
    </location>
    <ligand>
        <name>a divalent metal cation</name>
        <dbReference type="ChEBI" id="CHEBI:60240"/>
    </ligand>
</feature>
<proteinExistence type="inferred from homology"/>
<sequence>MKKQDRRPEILVCNDDGIEGEGIHVLAASMKKLGNVTVVAPAEPHSGMSHAMTLGVPLRIREFRRNNRFFGHTVSGTPVDCIKVALSHIMKVKPDLIVSGINYGSNTAMSTLYSGTVAAALEGAIQGVTSLAFSLTTYEHADFTYAGKFARKLARKVLQEGLPEDTILSVNIPNVPEADIQGVRITGQGRSRWSEDAIERNDMYGNPYYWLNGTLMLLDEGMESDEFAVRRNFVTLTPLSCDLTRHGFRSTLEQWKLKK</sequence>
<evidence type="ECO:0000255" key="1">
    <source>
        <dbReference type="HAMAP-Rule" id="MF_00060"/>
    </source>
</evidence>
<organism>
    <name type="scientific">Chlorobium luteolum (strain DSM 273 / BCRC 81028 / 2530)</name>
    <name type="common">Pelodictyon luteolum</name>
    <dbReference type="NCBI Taxonomy" id="319225"/>
    <lineage>
        <taxon>Bacteria</taxon>
        <taxon>Pseudomonadati</taxon>
        <taxon>Chlorobiota</taxon>
        <taxon>Chlorobiia</taxon>
        <taxon>Chlorobiales</taxon>
        <taxon>Chlorobiaceae</taxon>
        <taxon>Chlorobium/Pelodictyon group</taxon>
        <taxon>Pelodictyon</taxon>
    </lineage>
</organism>
<keyword id="KW-0963">Cytoplasm</keyword>
<keyword id="KW-0378">Hydrolase</keyword>
<keyword id="KW-0479">Metal-binding</keyword>
<keyword id="KW-0547">Nucleotide-binding</keyword>
<keyword id="KW-1185">Reference proteome</keyword>
<comment type="function">
    <text evidence="1">Nucleotidase that shows phosphatase activity on nucleoside 5'-monophosphates.</text>
</comment>
<comment type="catalytic activity">
    <reaction evidence="1">
        <text>a ribonucleoside 5'-phosphate + H2O = a ribonucleoside + phosphate</text>
        <dbReference type="Rhea" id="RHEA:12484"/>
        <dbReference type="ChEBI" id="CHEBI:15377"/>
        <dbReference type="ChEBI" id="CHEBI:18254"/>
        <dbReference type="ChEBI" id="CHEBI:43474"/>
        <dbReference type="ChEBI" id="CHEBI:58043"/>
        <dbReference type="EC" id="3.1.3.5"/>
    </reaction>
</comment>
<comment type="cofactor">
    <cofactor evidence="1">
        <name>a divalent metal cation</name>
        <dbReference type="ChEBI" id="CHEBI:60240"/>
    </cofactor>
    <text evidence="1">Binds 1 divalent metal cation per subunit.</text>
</comment>
<comment type="subcellular location">
    <subcellularLocation>
        <location evidence="1">Cytoplasm</location>
    </subcellularLocation>
</comment>
<comment type="similarity">
    <text evidence="1">Belongs to the SurE nucleotidase family.</text>
</comment>
<protein>
    <recommendedName>
        <fullName evidence="1">5'-nucleotidase SurE</fullName>
        <ecNumber evidence="1">3.1.3.5</ecNumber>
    </recommendedName>
    <alternativeName>
        <fullName evidence="1">Nucleoside 5'-monophosphate phosphohydrolase</fullName>
    </alternativeName>
</protein>
<accession>Q3B5Y2</accession>
<reference key="1">
    <citation type="submission" date="2005-08" db="EMBL/GenBank/DDBJ databases">
        <title>Complete sequence of Pelodictyon luteolum DSM 273.</title>
        <authorList>
            <consortium name="US DOE Joint Genome Institute"/>
            <person name="Copeland A."/>
            <person name="Lucas S."/>
            <person name="Lapidus A."/>
            <person name="Barry K."/>
            <person name="Detter J.C."/>
            <person name="Glavina T."/>
            <person name="Hammon N."/>
            <person name="Israni S."/>
            <person name="Pitluck S."/>
            <person name="Bryant D."/>
            <person name="Schmutz J."/>
            <person name="Larimer F."/>
            <person name="Land M."/>
            <person name="Kyrpides N."/>
            <person name="Ivanova N."/>
            <person name="Richardson P."/>
        </authorList>
    </citation>
    <scope>NUCLEOTIDE SEQUENCE [LARGE SCALE GENOMIC DNA]</scope>
    <source>
        <strain>DSM 273 / BCRC 81028 / 2530</strain>
    </source>
</reference>